<name>RK23_NICTO</name>
<geneLocation type="chloroplast"/>
<accession>Q33BY9</accession>
<reference key="1">
    <citation type="journal article" date="2006" name="Mol. Genet. Genomics">
        <title>The chloroplast genome of Nicotiana sylvestris and Nicotiana tomentosiformis: complete sequencing confirms that the Nicotiana sylvestris progenitor is the maternal genome donor of Nicotiana tabacum.</title>
        <authorList>
            <person name="Yukawa M."/>
            <person name="Tsudzuki T."/>
            <person name="Sugiura M."/>
        </authorList>
    </citation>
    <scope>NUCLEOTIDE SEQUENCE [LARGE SCALE GENOMIC DNA]</scope>
</reference>
<proteinExistence type="inferred from homology"/>
<sequence length="93" mass="10763">MDGIKYAVFTDKSIRLLGKNQYTSNVESGSTRTEIKHWVELFFGVKVIAMNSHRLPGKSRRMGPIMGHTMHYRRMIITLQPGYSIPPLRKKRT</sequence>
<evidence type="ECO:0000250" key="1"/>
<evidence type="ECO:0000305" key="2"/>
<comment type="function">
    <text evidence="1">Binds to 23S rRNA.</text>
</comment>
<comment type="subunit">
    <text evidence="1">Part of the 50S ribosomal subunit.</text>
</comment>
<comment type="subcellular location">
    <subcellularLocation>
        <location>Plastid</location>
        <location>Chloroplast</location>
    </subcellularLocation>
</comment>
<comment type="similarity">
    <text evidence="2">Belongs to the universal ribosomal protein uL23 family.</text>
</comment>
<organism>
    <name type="scientific">Nicotiana tomentosiformis</name>
    <name type="common">Tobacco</name>
    <dbReference type="NCBI Taxonomy" id="4098"/>
    <lineage>
        <taxon>Eukaryota</taxon>
        <taxon>Viridiplantae</taxon>
        <taxon>Streptophyta</taxon>
        <taxon>Embryophyta</taxon>
        <taxon>Tracheophyta</taxon>
        <taxon>Spermatophyta</taxon>
        <taxon>Magnoliopsida</taxon>
        <taxon>eudicotyledons</taxon>
        <taxon>Gunneridae</taxon>
        <taxon>Pentapetalae</taxon>
        <taxon>asterids</taxon>
        <taxon>lamiids</taxon>
        <taxon>Solanales</taxon>
        <taxon>Solanaceae</taxon>
        <taxon>Nicotianoideae</taxon>
        <taxon>Nicotianeae</taxon>
        <taxon>Nicotiana</taxon>
    </lineage>
</organism>
<gene>
    <name type="primary">rpl23-A</name>
</gene>
<gene>
    <name type="primary">rpl23-B</name>
</gene>
<dbReference type="EMBL" id="AB240139">
    <property type="protein sequence ID" value="BAE48046.1"/>
    <property type="molecule type" value="Genomic_DNA"/>
</dbReference>
<dbReference type="EMBL" id="AB240139">
    <property type="protein sequence ID" value="BAE48083.1"/>
    <property type="molecule type" value="Genomic_DNA"/>
</dbReference>
<dbReference type="SMR" id="Q33BY9"/>
<dbReference type="KEGG" id="nto:3776295"/>
<dbReference type="KEGG" id="nto:3776296"/>
<dbReference type="OrthoDB" id="1245557at2759"/>
<dbReference type="GO" id="GO:0009507">
    <property type="term" value="C:chloroplast"/>
    <property type="evidence" value="ECO:0007669"/>
    <property type="project" value="UniProtKB-SubCell"/>
</dbReference>
<dbReference type="GO" id="GO:1990904">
    <property type="term" value="C:ribonucleoprotein complex"/>
    <property type="evidence" value="ECO:0007669"/>
    <property type="project" value="UniProtKB-KW"/>
</dbReference>
<dbReference type="GO" id="GO:0005840">
    <property type="term" value="C:ribosome"/>
    <property type="evidence" value="ECO:0007669"/>
    <property type="project" value="UniProtKB-KW"/>
</dbReference>
<dbReference type="GO" id="GO:0003729">
    <property type="term" value="F:mRNA binding"/>
    <property type="evidence" value="ECO:0007669"/>
    <property type="project" value="UniProtKB-ARBA"/>
</dbReference>
<dbReference type="GO" id="GO:0019843">
    <property type="term" value="F:rRNA binding"/>
    <property type="evidence" value="ECO:0007669"/>
    <property type="project" value="UniProtKB-UniRule"/>
</dbReference>
<dbReference type="GO" id="GO:0003735">
    <property type="term" value="F:structural constituent of ribosome"/>
    <property type="evidence" value="ECO:0007669"/>
    <property type="project" value="InterPro"/>
</dbReference>
<dbReference type="GO" id="GO:0006412">
    <property type="term" value="P:translation"/>
    <property type="evidence" value="ECO:0007669"/>
    <property type="project" value="UniProtKB-UniRule"/>
</dbReference>
<dbReference type="FunFam" id="3.30.70.330:FF:000002">
    <property type="entry name" value="50S ribosomal protein L23, chloroplastic"/>
    <property type="match status" value="1"/>
</dbReference>
<dbReference type="Gene3D" id="3.30.70.330">
    <property type="match status" value="1"/>
</dbReference>
<dbReference type="HAMAP" id="MF_01369_B">
    <property type="entry name" value="Ribosomal_uL23_B"/>
    <property type="match status" value="1"/>
</dbReference>
<dbReference type="InterPro" id="IPR012677">
    <property type="entry name" value="Nucleotide-bd_a/b_plait_sf"/>
</dbReference>
<dbReference type="InterPro" id="IPR013025">
    <property type="entry name" value="Ribosomal_uL23-like"/>
</dbReference>
<dbReference type="InterPro" id="IPR012678">
    <property type="entry name" value="Ribosomal_uL23/eL15/eS24_sf"/>
</dbReference>
<dbReference type="InterPro" id="IPR001014">
    <property type="entry name" value="Ribosomal_uL23_CS"/>
</dbReference>
<dbReference type="PANTHER" id="PTHR11620">
    <property type="entry name" value="60S RIBOSOMAL PROTEIN L23A"/>
    <property type="match status" value="1"/>
</dbReference>
<dbReference type="Pfam" id="PF00276">
    <property type="entry name" value="Ribosomal_L23"/>
    <property type="match status" value="1"/>
</dbReference>
<dbReference type="SUPFAM" id="SSF54189">
    <property type="entry name" value="Ribosomal proteins S24e, L23 and L15e"/>
    <property type="match status" value="1"/>
</dbReference>
<dbReference type="PROSITE" id="PS00050">
    <property type="entry name" value="RIBOSOMAL_L23"/>
    <property type="match status" value="1"/>
</dbReference>
<keyword id="KW-0150">Chloroplast</keyword>
<keyword id="KW-0934">Plastid</keyword>
<keyword id="KW-0687">Ribonucleoprotein</keyword>
<keyword id="KW-0689">Ribosomal protein</keyword>
<keyword id="KW-0694">RNA-binding</keyword>
<keyword id="KW-0699">rRNA-binding</keyword>
<feature type="chain" id="PRO_0000272911" description="Large ribosomal subunit protein uL23cz/uL23cy">
    <location>
        <begin position="1"/>
        <end position="93"/>
    </location>
</feature>
<protein>
    <recommendedName>
        <fullName evidence="2">Large ribosomal subunit protein uL23cz/uL23cy</fullName>
    </recommendedName>
    <alternativeName>
        <fullName>50S ribosomal protein L23, chloroplastic</fullName>
    </alternativeName>
</protein>